<sequence length="297" mass="31151">MSGAGVGGGIVIVDKPAGMTSHDVVGRCRRIFGTRKVGHAGTLDPMATGVLVVGIDRATKLLGLLTATDKSYEATIRLGQTTTTEDAEGDVVETTPATGITDEQIGHAVAALRGEIDQVPSAVSAIKVGGQRAYKLAREGQTVELAARRVRIDRFEVLAIRRVDGFVDVDVAVDCSSGTYIRALARDVGVTLGVGGHLTLLRRTRVGRFGLDEAYPLDALADEPRLSHSLDEACLLSFPRRDLTPAEAESTRHGRALAPAGIDGVYAAAAPDGSVLALLEDGPQRTKSVVVLRPATL</sequence>
<organism>
    <name type="scientific">Mycobacterium sp. (strain KMS)</name>
    <dbReference type="NCBI Taxonomy" id="189918"/>
    <lineage>
        <taxon>Bacteria</taxon>
        <taxon>Bacillati</taxon>
        <taxon>Actinomycetota</taxon>
        <taxon>Actinomycetes</taxon>
        <taxon>Mycobacteriales</taxon>
        <taxon>Mycobacteriaceae</taxon>
        <taxon>Mycobacterium</taxon>
    </lineage>
</organism>
<name>TRUB_MYCSK</name>
<keyword id="KW-0413">Isomerase</keyword>
<keyword id="KW-0819">tRNA processing</keyword>
<evidence type="ECO:0000255" key="1">
    <source>
        <dbReference type="HAMAP-Rule" id="MF_01080"/>
    </source>
</evidence>
<gene>
    <name evidence="1" type="primary">truB</name>
    <name type="ordered locus">Mkms_2141</name>
</gene>
<accession>A1UET1</accession>
<reference key="1">
    <citation type="submission" date="2006-12" db="EMBL/GenBank/DDBJ databases">
        <title>Complete sequence of chromosome of Mycobacterium sp. KMS.</title>
        <authorList>
            <consortium name="US DOE Joint Genome Institute"/>
            <person name="Copeland A."/>
            <person name="Lucas S."/>
            <person name="Lapidus A."/>
            <person name="Barry K."/>
            <person name="Detter J.C."/>
            <person name="Glavina del Rio T."/>
            <person name="Hammon N."/>
            <person name="Israni S."/>
            <person name="Dalin E."/>
            <person name="Tice H."/>
            <person name="Pitluck S."/>
            <person name="Kiss H."/>
            <person name="Brettin T."/>
            <person name="Bruce D."/>
            <person name="Han C."/>
            <person name="Tapia R."/>
            <person name="Gilna P."/>
            <person name="Schmutz J."/>
            <person name="Larimer F."/>
            <person name="Land M."/>
            <person name="Hauser L."/>
            <person name="Kyrpides N."/>
            <person name="Mikhailova N."/>
            <person name="Miller C.D."/>
            <person name="Richardson P."/>
        </authorList>
    </citation>
    <scope>NUCLEOTIDE SEQUENCE [LARGE SCALE GENOMIC DNA]</scope>
    <source>
        <strain>KMS</strain>
    </source>
</reference>
<feature type="chain" id="PRO_1000149827" description="tRNA pseudouridine synthase B">
    <location>
        <begin position="1"/>
        <end position="297"/>
    </location>
</feature>
<feature type="active site" description="Nucleophile" evidence="1">
    <location>
        <position position="44"/>
    </location>
</feature>
<proteinExistence type="inferred from homology"/>
<comment type="function">
    <text evidence="1">Responsible for synthesis of pseudouridine from uracil-55 in the psi GC loop of transfer RNAs.</text>
</comment>
<comment type="catalytic activity">
    <reaction evidence="1">
        <text>uridine(55) in tRNA = pseudouridine(55) in tRNA</text>
        <dbReference type="Rhea" id="RHEA:42532"/>
        <dbReference type="Rhea" id="RHEA-COMP:10101"/>
        <dbReference type="Rhea" id="RHEA-COMP:10102"/>
        <dbReference type="ChEBI" id="CHEBI:65314"/>
        <dbReference type="ChEBI" id="CHEBI:65315"/>
        <dbReference type="EC" id="5.4.99.25"/>
    </reaction>
</comment>
<comment type="similarity">
    <text evidence="1">Belongs to the pseudouridine synthase TruB family. Type 1 subfamily.</text>
</comment>
<protein>
    <recommendedName>
        <fullName evidence="1">tRNA pseudouridine synthase B</fullName>
        <ecNumber evidence="1">5.4.99.25</ecNumber>
    </recommendedName>
    <alternativeName>
        <fullName evidence="1">tRNA pseudouridine(55) synthase</fullName>
        <shortName evidence="1">Psi55 synthase</shortName>
    </alternativeName>
    <alternativeName>
        <fullName evidence="1">tRNA pseudouridylate synthase</fullName>
    </alternativeName>
    <alternativeName>
        <fullName evidence="1">tRNA-uridine isomerase</fullName>
    </alternativeName>
</protein>
<dbReference type="EC" id="5.4.99.25" evidence="1"/>
<dbReference type="EMBL" id="CP000518">
    <property type="protein sequence ID" value="ABL91339.1"/>
    <property type="molecule type" value="Genomic_DNA"/>
</dbReference>
<dbReference type="SMR" id="A1UET1"/>
<dbReference type="STRING" id="189918.Mkms_2141"/>
<dbReference type="KEGG" id="mkm:Mkms_2141"/>
<dbReference type="HOGENOM" id="CLU_032087_0_0_11"/>
<dbReference type="OrthoDB" id="9802309at2"/>
<dbReference type="GO" id="GO:0003723">
    <property type="term" value="F:RNA binding"/>
    <property type="evidence" value="ECO:0007669"/>
    <property type="project" value="InterPro"/>
</dbReference>
<dbReference type="GO" id="GO:0160148">
    <property type="term" value="F:tRNA pseudouridine(55) synthase activity"/>
    <property type="evidence" value="ECO:0007669"/>
    <property type="project" value="UniProtKB-EC"/>
</dbReference>
<dbReference type="GO" id="GO:1990481">
    <property type="term" value="P:mRNA pseudouridine synthesis"/>
    <property type="evidence" value="ECO:0007669"/>
    <property type="project" value="TreeGrafter"/>
</dbReference>
<dbReference type="GO" id="GO:0031119">
    <property type="term" value="P:tRNA pseudouridine synthesis"/>
    <property type="evidence" value="ECO:0007669"/>
    <property type="project" value="UniProtKB-UniRule"/>
</dbReference>
<dbReference type="CDD" id="cd02573">
    <property type="entry name" value="PseudoU_synth_EcTruB"/>
    <property type="match status" value="1"/>
</dbReference>
<dbReference type="FunFam" id="3.30.2350.10:FF:000011">
    <property type="entry name" value="tRNA pseudouridine synthase B"/>
    <property type="match status" value="1"/>
</dbReference>
<dbReference type="Gene3D" id="3.30.2350.10">
    <property type="entry name" value="Pseudouridine synthase"/>
    <property type="match status" value="1"/>
</dbReference>
<dbReference type="Gene3D" id="2.30.130.10">
    <property type="entry name" value="PUA domain"/>
    <property type="match status" value="1"/>
</dbReference>
<dbReference type="HAMAP" id="MF_01080">
    <property type="entry name" value="TruB_bact"/>
    <property type="match status" value="1"/>
</dbReference>
<dbReference type="InterPro" id="IPR020103">
    <property type="entry name" value="PsdUridine_synth_cat_dom_sf"/>
</dbReference>
<dbReference type="InterPro" id="IPR002501">
    <property type="entry name" value="PsdUridine_synth_N"/>
</dbReference>
<dbReference type="InterPro" id="IPR015947">
    <property type="entry name" value="PUA-like_sf"/>
</dbReference>
<dbReference type="InterPro" id="IPR036974">
    <property type="entry name" value="PUA_sf"/>
</dbReference>
<dbReference type="InterPro" id="IPR015225">
    <property type="entry name" value="tRNA_psdUridine_synth_fam2_C"/>
</dbReference>
<dbReference type="InterPro" id="IPR014780">
    <property type="entry name" value="tRNA_psdUridine_synth_TruB"/>
</dbReference>
<dbReference type="InterPro" id="IPR032819">
    <property type="entry name" value="TruB_C"/>
</dbReference>
<dbReference type="NCBIfam" id="TIGR00431">
    <property type="entry name" value="TruB"/>
    <property type="match status" value="1"/>
</dbReference>
<dbReference type="PANTHER" id="PTHR13767:SF2">
    <property type="entry name" value="PSEUDOURIDYLATE SYNTHASE TRUB1"/>
    <property type="match status" value="1"/>
</dbReference>
<dbReference type="PANTHER" id="PTHR13767">
    <property type="entry name" value="TRNA-PSEUDOURIDINE SYNTHASE"/>
    <property type="match status" value="1"/>
</dbReference>
<dbReference type="Pfam" id="PF09142">
    <property type="entry name" value="TruB_C"/>
    <property type="match status" value="1"/>
</dbReference>
<dbReference type="Pfam" id="PF16198">
    <property type="entry name" value="TruB_C_2"/>
    <property type="match status" value="1"/>
</dbReference>
<dbReference type="Pfam" id="PF01509">
    <property type="entry name" value="TruB_N"/>
    <property type="match status" value="1"/>
</dbReference>
<dbReference type="SUPFAM" id="SSF55120">
    <property type="entry name" value="Pseudouridine synthase"/>
    <property type="match status" value="1"/>
</dbReference>
<dbReference type="SUPFAM" id="SSF88697">
    <property type="entry name" value="PUA domain-like"/>
    <property type="match status" value="1"/>
</dbReference>